<feature type="chain" id="PRO_0000255412" description="Probable 2-(5''-triphosphoribosyl)-3'-dephosphocoenzyme-A synthase 2">
    <location>
        <begin position="1"/>
        <end position="298"/>
    </location>
</feature>
<accession>Q8Z8J2</accession>
<accession>Q7C8J2</accession>
<gene>
    <name evidence="1" type="primary">citG2</name>
    <name type="ordered locus">STY0668</name>
    <name type="ordered locus">t2248</name>
</gene>
<reference key="1">
    <citation type="journal article" date="2001" name="Nature">
        <title>Complete genome sequence of a multiple drug resistant Salmonella enterica serovar Typhi CT18.</title>
        <authorList>
            <person name="Parkhill J."/>
            <person name="Dougan G."/>
            <person name="James K.D."/>
            <person name="Thomson N.R."/>
            <person name="Pickard D."/>
            <person name="Wain J."/>
            <person name="Churcher C.M."/>
            <person name="Mungall K.L."/>
            <person name="Bentley S.D."/>
            <person name="Holden M.T.G."/>
            <person name="Sebaihia M."/>
            <person name="Baker S."/>
            <person name="Basham D."/>
            <person name="Brooks K."/>
            <person name="Chillingworth T."/>
            <person name="Connerton P."/>
            <person name="Cronin A."/>
            <person name="Davis P."/>
            <person name="Davies R.M."/>
            <person name="Dowd L."/>
            <person name="White N."/>
            <person name="Farrar J."/>
            <person name="Feltwell T."/>
            <person name="Hamlin N."/>
            <person name="Haque A."/>
            <person name="Hien T.T."/>
            <person name="Holroyd S."/>
            <person name="Jagels K."/>
            <person name="Krogh A."/>
            <person name="Larsen T.S."/>
            <person name="Leather S."/>
            <person name="Moule S."/>
            <person name="O'Gaora P."/>
            <person name="Parry C."/>
            <person name="Quail M.A."/>
            <person name="Rutherford K.M."/>
            <person name="Simmonds M."/>
            <person name="Skelton J."/>
            <person name="Stevens K."/>
            <person name="Whitehead S."/>
            <person name="Barrell B.G."/>
        </authorList>
    </citation>
    <scope>NUCLEOTIDE SEQUENCE [LARGE SCALE GENOMIC DNA]</scope>
    <source>
        <strain>CT18</strain>
    </source>
</reference>
<reference key="2">
    <citation type="journal article" date="2003" name="J. Bacteriol.">
        <title>Comparative genomics of Salmonella enterica serovar Typhi strains Ty2 and CT18.</title>
        <authorList>
            <person name="Deng W."/>
            <person name="Liou S.-R."/>
            <person name="Plunkett G. III"/>
            <person name="Mayhew G.F."/>
            <person name="Rose D.J."/>
            <person name="Burland V."/>
            <person name="Kodoyianni V."/>
            <person name="Schwartz D.C."/>
            <person name="Blattner F.R."/>
        </authorList>
    </citation>
    <scope>NUCLEOTIDE SEQUENCE [LARGE SCALE GENOMIC DNA]</scope>
    <source>
        <strain>ATCC 700931 / Ty2</strain>
    </source>
</reference>
<organism>
    <name type="scientific">Salmonella typhi</name>
    <dbReference type="NCBI Taxonomy" id="90370"/>
    <lineage>
        <taxon>Bacteria</taxon>
        <taxon>Pseudomonadati</taxon>
        <taxon>Pseudomonadota</taxon>
        <taxon>Gammaproteobacteria</taxon>
        <taxon>Enterobacterales</taxon>
        <taxon>Enterobacteriaceae</taxon>
        <taxon>Salmonella</taxon>
    </lineage>
</organism>
<keyword id="KW-0067">ATP-binding</keyword>
<keyword id="KW-0547">Nucleotide-binding</keyword>
<keyword id="KW-0808">Transferase</keyword>
<comment type="catalytic activity">
    <reaction evidence="1">
        <text>3'-dephospho-CoA + ATP = 2'-(5''-triphospho-alpha-D-ribosyl)-3'-dephospho-CoA + adenine</text>
        <dbReference type="Rhea" id="RHEA:15117"/>
        <dbReference type="ChEBI" id="CHEBI:16708"/>
        <dbReference type="ChEBI" id="CHEBI:30616"/>
        <dbReference type="ChEBI" id="CHEBI:57328"/>
        <dbReference type="ChEBI" id="CHEBI:61378"/>
        <dbReference type="EC" id="2.4.2.52"/>
    </reaction>
</comment>
<comment type="similarity">
    <text evidence="1">Belongs to the CitG/MdcB family.</text>
</comment>
<dbReference type="EC" id="2.4.2.52" evidence="1"/>
<dbReference type="EMBL" id="AL513382">
    <property type="protein sequence ID" value="CAD05096.1"/>
    <property type="molecule type" value="Genomic_DNA"/>
</dbReference>
<dbReference type="EMBL" id="AE014613">
    <property type="protein sequence ID" value="AAO69850.1"/>
    <property type="molecule type" value="Genomic_DNA"/>
</dbReference>
<dbReference type="RefSeq" id="NP_455196.1">
    <property type="nucleotide sequence ID" value="NC_003198.1"/>
</dbReference>
<dbReference type="STRING" id="220341.gene:17584677"/>
<dbReference type="KEGG" id="stt:t2248"/>
<dbReference type="KEGG" id="sty:STY0668"/>
<dbReference type="PATRIC" id="fig|220341.7.peg.669"/>
<dbReference type="eggNOG" id="COG1767">
    <property type="taxonomic scope" value="Bacteria"/>
</dbReference>
<dbReference type="HOGENOM" id="CLU_056179_1_0_6"/>
<dbReference type="OMA" id="ACEQAMY"/>
<dbReference type="Proteomes" id="UP000000541">
    <property type="component" value="Chromosome"/>
</dbReference>
<dbReference type="Proteomes" id="UP000002670">
    <property type="component" value="Chromosome"/>
</dbReference>
<dbReference type="GO" id="GO:0005524">
    <property type="term" value="F:ATP binding"/>
    <property type="evidence" value="ECO:0007669"/>
    <property type="project" value="UniProtKB-KW"/>
</dbReference>
<dbReference type="GO" id="GO:0046917">
    <property type="term" value="F:triphosphoribosyl-dephospho-CoA synthase activity"/>
    <property type="evidence" value="ECO:0007669"/>
    <property type="project" value="UniProtKB-UniRule"/>
</dbReference>
<dbReference type="GO" id="GO:0051191">
    <property type="term" value="P:prosthetic group biosynthetic process"/>
    <property type="evidence" value="ECO:0007669"/>
    <property type="project" value="TreeGrafter"/>
</dbReference>
<dbReference type="FunFam" id="1.10.4200.10:FF:000001">
    <property type="entry name" value="Triphosphoribosyl-dephospho-CoA synthase CitG"/>
    <property type="match status" value="1"/>
</dbReference>
<dbReference type="Gene3D" id="1.10.4200.10">
    <property type="entry name" value="Triphosphoribosyl-dephospho-CoA protein"/>
    <property type="match status" value="1"/>
</dbReference>
<dbReference type="HAMAP" id="MF_00397">
    <property type="entry name" value="CitG"/>
    <property type="match status" value="1"/>
</dbReference>
<dbReference type="InterPro" id="IPR002736">
    <property type="entry name" value="CitG"/>
</dbReference>
<dbReference type="InterPro" id="IPR017551">
    <property type="entry name" value="TriPribosyl-deP-CoA_syn_CitG"/>
</dbReference>
<dbReference type="NCBIfam" id="TIGR03125">
    <property type="entry name" value="citrate_citG"/>
    <property type="match status" value="1"/>
</dbReference>
<dbReference type="NCBIfam" id="NF007503">
    <property type="entry name" value="PRK10096.1"/>
    <property type="match status" value="1"/>
</dbReference>
<dbReference type="PANTHER" id="PTHR30201:SF2">
    <property type="entry name" value="2-(5''-TRIPHOSPHORIBOSYL)-3'-DEPHOSPHOCOENZYME-A SYNTHASE"/>
    <property type="match status" value="1"/>
</dbReference>
<dbReference type="PANTHER" id="PTHR30201">
    <property type="entry name" value="TRIPHOSPHORIBOSYL-DEPHOSPHO-COA SYNTHASE"/>
    <property type="match status" value="1"/>
</dbReference>
<dbReference type="Pfam" id="PF01874">
    <property type="entry name" value="CitG"/>
    <property type="match status" value="1"/>
</dbReference>
<proteinExistence type="inferred from homology"/>
<name>CITG2_SALTI</name>
<protein>
    <recommendedName>
        <fullName evidence="1">Probable 2-(5''-triphosphoribosyl)-3'-dephosphocoenzyme-A synthase 2</fullName>
        <shortName evidence="1">2-(5''-triphosphoribosyl)-3'-dephospho-CoA synthase 2</shortName>
        <ecNumber evidence="1">2.4.2.52</ecNumber>
    </recommendedName>
</protein>
<sequence>MMPIPVNPTNASIQPQSLYDAWADLAWRAMLTEVNLSPKPGLVDRLNCGAHKDMALADFHRSAEAIRHWLPRFMEYGASCTRLPPESVLAGLRPLGMACEAAMFRATAGVNTHKGSIFSLGLLCAAIGRLYQLRQPIAAETLCATAADFCRGLTTRELRQNNLQLTAGQRLYQQLGLTGARGEAEAGYPLVIRHALPHYRALLAQGRDPELALLDTLLLLMSLNGDTNVASRGGADGLRWLQQQAAVLLHQGGIRTPDDLVYLHRFDQQCIERNLSPGGSADLLIVTWFLAQISQVNH</sequence>
<evidence type="ECO:0000255" key="1">
    <source>
        <dbReference type="HAMAP-Rule" id="MF_00397"/>
    </source>
</evidence>